<name>RL18_VESOH</name>
<dbReference type="EMBL" id="AP009247">
    <property type="protein sequence ID" value="BAF61315.1"/>
    <property type="molecule type" value="Genomic_DNA"/>
</dbReference>
<dbReference type="RefSeq" id="WP_011929585.1">
    <property type="nucleotide sequence ID" value="NC_009465.1"/>
</dbReference>
<dbReference type="SMR" id="A5CXM0"/>
<dbReference type="STRING" id="412965.COSY_0185"/>
<dbReference type="KEGG" id="vok:COSY_0185"/>
<dbReference type="eggNOG" id="COG0256">
    <property type="taxonomic scope" value="Bacteria"/>
</dbReference>
<dbReference type="HOGENOM" id="CLU_098841_0_1_6"/>
<dbReference type="OrthoDB" id="9810939at2"/>
<dbReference type="Proteomes" id="UP000000247">
    <property type="component" value="Chromosome"/>
</dbReference>
<dbReference type="GO" id="GO:0022625">
    <property type="term" value="C:cytosolic large ribosomal subunit"/>
    <property type="evidence" value="ECO:0007669"/>
    <property type="project" value="TreeGrafter"/>
</dbReference>
<dbReference type="GO" id="GO:0008097">
    <property type="term" value="F:5S rRNA binding"/>
    <property type="evidence" value="ECO:0007669"/>
    <property type="project" value="TreeGrafter"/>
</dbReference>
<dbReference type="GO" id="GO:0003735">
    <property type="term" value="F:structural constituent of ribosome"/>
    <property type="evidence" value="ECO:0007669"/>
    <property type="project" value="InterPro"/>
</dbReference>
<dbReference type="GO" id="GO:0006412">
    <property type="term" value="P:translation"/>
    <property type="evidence" value="ECO:0007669"/>
    <property type="project" value="UniProtKB-UniRule"/>
</dbReference>
<dbReference type="CDD" id="cd00432">
    <property type="entry name" value="Ribosomal_L18_L5e"/>
    <property type="match status" value="1"/>
</dbReference>
<dbReference type="FunFam" id="3.30.420.100:FF:000001">
    <property type="entry name" value="50S ribosomal protein L18"/>
    <property type="match status" value="1"/>
</dbReference>
<dbReference type="Gene3D" id="3.30.420.100">
    <property type="match status" value="1"/>
</dbReference>
<dbReference type="HAMAP" id="MF_01337_B">
    <property type="entry name" value="Ribosomal_uL18_B"/>
    <property type="match status" value="1"/>
</dbReference>
<dbReference type="InterPro" id="IPR004389">
    <property type="entry name" value="Ribosomal_uL18_bac-type"/>
</dbReference>
<dbReference type="InterPro" id="IPR005484">
    <property type="entry name" value="Ribosomal_uL18_bac/euk"/>
</dbReference>
<dbReference type="NCBIfam" id="TIGR00060">
    <property type="entry name" value="L18_bact"/>
    <property type="match status" value="1"/>
</dbReference>
<dbReference type="PANTHER" id="PTHR12899">
    <property type="entry name" value="39S RIBOSOMAL PROTEIN L18, MITOCHONDRIAL"/>
    <property type="match status" value="1"/>
</dbReference>
<dbReference type="PANTHER" id="PTHR12899:SF3">
    <property type="entry name" value="LARGE RIBOSOMAL SUBUNIT PROTEIN UL18M"/>
    <property type="match status" value="1"/>
</dbReference>
<dbReference type="Pfam" id="PF00861">
    <property type="entry name" value="Ribosomal_L18p"/>
    <property type="match status" value="1"/>
</dbReference>
<dbReference type="SUPFAM" id="SSF53137">
    <property type="entry name" value="Translational machinery components"/>
    <property type="match status" value="1"/>
</dbReference>
<gene>
    <name evidence="1" type="primary">rplR</name>
    <name type="ordered locus">COSY_0185</name>
</gene>
<protein>
    <recommendedName>
        <fullName evidence="1">Large ribosomal subunit protein uL18</fullName>
    </recommendedName>
    <alternativeName>
        <fullName evidence="2">50S ribosomal protein L18</fullName>
    </alternativeName>
</protein>
<reference key="1">
    <citation type="journal article" date="2007" name="Curr. Biol.">
        <title>Reduced genome of the thioautotrophic intracellular symbiont in a deep-sea clam, Calyptogena okutanii.</title>
        <authorList>
            <person name="Kuwahara H."/>
            <person name="Yoshida T."/>
            <person name="Takaki Y."/>
            <person name="Shimamura S."/>
            <person name="Nishi S."/>
            <person name="Harada M."/>
            <person name="Matsuyama K."/>
            <person name="Takishita K."/>
            <person name="Kawato M."/>
            <person name="Uematsu K."/>
            <person name="Fujiwara Y."/>
            <person name="Sato T."/>
            <person name="Kato C."/>
            <person name="Kitagawa M."/>
            <person name="Kato I."/>
            <person name="Maruyama T."/>
        </authorList>
    </citation>
    <scope>NUCLEOTIDE SEQUENCE [LARGE SCALE GENOMIC DNA]</scope>
    <source>
        <strain>HA</strain>
    </source>
</reference>
<organism>
    <name type="scientific">Vesicomyosocius okutanii subsp. Calyptogena okutanii (strain HA)</name>
    <dbReference type="NCBI Taxonomy" id="412965"/>
    <lineage>
        <taxon>Bacteria</taxon>
        <taxon>Pseudomonadati</taxon>
        <taxon>Pseudomonadota</taxon>
        <taxon>Gammaproteobacteria</taxon>
        <taxon>Candidatus Pseudothioglobaceae</taxon>
        <taxon>Candidatus Vesicomyosocius</taxon>
    </lineage>
</organism>
<proteinExistence type="inferred from homology"/>
<comment type="function">
    <text evidence="1">This is one of the proteins that bind and probably mediate the attachment of the 5S RNA into the large ribosomal subunit, where it forms part of the central protuberance.</text>
</comment>
<comment type="subunit">
    <text evidence="1">Part of the 50S ribosomal subunit; part of the 5S rRNA/L5/L18/L25 subcomplex. Contacts the 5S and 23S rRNAs.</text>
</comment>
<comment type="similarity">
    <text evidence="1">Belongs to the universal ribosomal protein uL18 family.</text>
</comment>
<feature type="chain" id="PRO_1000086695" description="Large ribosomal subunit protein uL18">
    <location>
        <begin position="1"/>
        <end position="115"/>
    </location>
</feature>
<sequence>MKFLKKQARLRRATKFRAKHAKKDIERLCIHKTAQHIYAQIISSCGTKILASASTLKAKLKNGGNVDAAVKVGEAIAKAATSVKVKKVAFDRSGFKYHGRVKALADAAREGGLDF</sequence>
<keyword id="KW-1185">Reference proteome</keyword>
<keyword id="KW-0687">Ribonucleoprotein</keyword>
<keyword id="KW-0689">Ribosomal protein</keyword>
<keyword id="KW-0694">RNA-binding</keyword>
<keyword id="KW-0699">rRNA-binding</keyword>
<evidence type="ECO:0000255" key="1">
    <source>
        <dbReference type="HAMAP-Rule" id="MF_01337"/>
    </source>
</evidence>
<evidence type="ECO:0000305" key="2"/>
<accession>A5CXM0</accession>